<organism>
    <name type="scientific">Aspergillus terreus (strain NIH 2624 / FGSC A1156)</name>
    <dbReference type="NCBI Taxonomy" id="341663"/>
    <lineage>
        <taxon>Eukaryota</taxon>
        <taxon>Fungi</taxon>
        <taxon>Dikarya</taxon>
        <taxon>Ascomycota</taxon>
        <taxon>Pezizomycotina</taxon>
        <taxon>Eurotiomycetes</taxon>
        <taxon>Eurotiomycetidae</taxon>
        <taxon>Eurotiales</taxon>
        <taxon>Aspergillaceae</taxon>
        <taxon>Aspergillus</taxon>
        <taxon>Aspergillus subgen. Circumdati</taxon>
    </lineage>
</organism>
<sequence length="340" mass="37582">MSSTAVVHDDDLMEPSLQSIVNQKTLRWIFVGGKGGVGKTTTSCSLAIQLAKVRKSVLLISTDPAHNLSDAFGQKFGKEARLVDGFTNLSAMEIDPNGSIQDLLASGDAQQDDPMAGLGVNNMMQDLAFSIPGVDEAMSFAEVLKQVKSLSYEVIVFDTAPTGHTLRFLQFPTVLEKALAKLSQLSSQFGPMLNSILGARGGLPGGQNLDELLQKMESLRETISEVNSQFKDADLTTFVCVCIAEFLSLYETERMIQELTSYSIDTHAIVVNQLLFPKDGSECDQCNARRKMQKKYLEQIEELYEDFNVVRMPLLVEEVRGKEKLEKFSDMLVHPYVPPN</sequence>
<dbReference type="EC" id="3.6.-.-" evidence="1"/>
<dbReference type="EMBL" id="CH476599">
    <property type="protein sequence ID" value="EAU35117.1"/>
    <property type="molecule type" value="Genomic_DNA"/>
</dbReference>
<dbReference type="RefSeq" id="XP_001213848.1">
    <property type="nucleotide sequence ID" value="XM_001213848.1"/>
</dbReference>
<dbReference type="SMR" id="Q0CNR4"/>
<dbReference type="STRING" id="341663.Q0CNR4"/>
<dbReference type="EnsemblFungi" id="EAU35117">
    <property type="protein sequence ID" value="EAU35117"/>
    <property type="gene ID" value="ATEG_04670"/>
</dbReference>
<dbReference type="GeneID" id="4320480"/>
<dbReference type="VEuPathDB" id="FungiDB:ATEG_04670"/>
<dbReference type="eggNOG" id="KOG2825">
    <property type="taxonomic scope" value="Eukaryota"/>
</dbReference>
<dbReference type="HOGENOM" id="CLU_040761_0_0_1"/>
<dbReference type="OMA" id="MDAPYEF"/>
<dbReference type="OrthoDB" id="1770at2759"/>
<dbReference type="Proteomes" id="UP000007963">
    <property type="component" value="Unassembled WGS sequence"/>
</dbReference>
<dbReference type="GO" id="GO:0043529">
    <property type="term" value="C:GET complex"/>
    <property type="evidence" value="ECO:0007669"/>
    <property type="project" value="EnsemblFungi"/>
</dbReference>
<dbReference type="GO" id="GO:0005524">
    <property type="term" value="F:ATP binding"/>
    <property type="evidence" value="ECO:0007669"/>
    <property type="project" value="UniProtKB-UniRule"/>
</dbReference>
<dbReference type="GO" id="GO:0016887">
    <property type="term" value="F:ATP hydrolysis activity"/>
    <property type="evidence" value="ECO:0007669"/>
    <property type="project" value="EnsemblFungi"/>
</dbReference>
<dbReference type="GO" id="GO:0005085">
    <property type="term" value="F:guanyl-nucleotide exchange factor activity"/>
    <property type="evidence" value="ECO:0007669"/>
    <property type="project" value="EnsemblFungi"/>
</dbReference>
<dbReference type="GO" id="GO:0042802">
    <property type="term" value="F:identical protein binding"/>
    <property type="evidence" value="ECO:0007669"/>
    <property type="project" value="EnsemblFungi"/>
</dbReference>
<dbReference type="GO" id="GO:0046872">
    <property type="term" value="F:metal ion binding"/>
    <property type="evidence" value="ECO:0007669"/>
    <property type="project" value="UniProtKB-KW"/>
</dbReference>
<dbReference type="GO" id="GO:0044183">
    <property type="term" value="F:protein folding chaperone"/>
    <property type="evidence" value="ECO:0007669"/>
    <property type="project" value="EnsemblFungi"/>
</dbReference>
<dbReference type="GO" id="GO:0051082">
    <property type="term" value="F:unfolded protein binding"/>
    <property type="evidence" value="ECO:0007669"/>
    <property type="project" value="EnsemblFungi"/>
</dbReference>
<dbReference type="GO" id="GO:0034599">
    <property type="term" value="P:cellular response to oxidative stress"/>
    <property type="evidence" value="ECO:0007669"/>
    <property type="project" value="EnsemblFungi"/>
</dbReference>
<dbReference type="GO" id="GO:0000750">
    <property type="term" value="P:pheromone-dependent signal transduction involved in conjugation with cellular fusion"/>
    <property type="evidence" value="ECO:0007669"/>
    <property type="project" value="EnsemblFungi"/>
</dbReference>
<dbReference type="GO" id="GO:0006620">
    <property type="term" value="P:post-translational protein targeting to endoplasmic reticulum membrane"/>
    <property type="evidence" value="ECO:0007669"/>
    <property type="project" value="EnsemblFungi"/>
</dbReference>
<dbReference type="GO" id="GO:0009408">
    <property type="term" value="P:response to heat"/>
    <property type="evidence" value="ECO:0007669"/>
    <property type="project" value="EnsemblFungi"/>
</dbReference>
<dbReference type="GO" id="GO:0010038">
    <property type="term" value="P:response to metal ion"/>
    <property type="evidence" value="ECO:0007669"/>
    <property type="project" value="EnsemblFungi"/>
</dbReference>
<dbReference type="GO" id="GO:0006890">
    <property type="term" value="P:retrograde vesicle-mediated transport, Golgi to endoplasmic reticulum"/>
    <property type="evidence" value="ECO:0007669"/>
    <property type="project" value="EnsemblFungi"/>
</dbReference>
<dbReference type="GO" id="GO:0071816">
    <property type="term" value="P:tail-anchored membrane protein insertion into ER membrane"/>
    <property type="evidence" value="ECO:0007669"/>
    <property type="project" value="EnsemblFungi"/>
</dbReference>
<dbReference type="CDD" id="cd02035">
    <property type="entry name" value="ArsA"/>
    <property type="match status" value="1"/>
</dbReference>
<dbReference type="FunFam" id="3.40.50.300:FF:000235">
    <property type="entry name" value="ATPase ASNA1"/>
    <property type="match status" value="1"/>
</dbReference>
<dbReference type="Gene3D" id="3.40.50.300">
    <property type="entry name" value="P-loop containing nucleotide triphosphate hydrolases"/>
    <property type="match status" value="1"/>
</dbReference>
<dbReference type="HAMAP" id="MF_03112">
    <property type="entry name" value="Asna1_Get3"/>
    <property type="match status" value="1"/>
</dbReference>
<dbReference type="InterPro" id="IPR025723">
    <property type="entry name" value="Anion-transp_ATPase-like_dom"/>
</dbReference>
<dbReference type="InterPro" id="IPR016300">
    <property type="entry name" value="ATPase_ArsA/GET3"/>
</dbReference>
<dbReference type="InterPro" id="IPR027542">
    <property type="entry name" value="ATPase_ArsA/GET3_euk"/>
</dbReference>
<dbReference type="InterPro" id="IPR027417">
    <property type="entry name" value="P-loop_NTPase"/>
</dbReference>
<dbReference type="NCBIfam" id="TIGR00345">
    <property type="entry name" value="GET3_arsA_TRC40"/>
    <property type="match status" value="1"/>
</dbReference>
<dbReference type="PANTHER" id="PTHR10803">
    <property type="entry name" value="ARSENICAL PUMP-DRIVING ATPASE ARSENITE-TRANSLOCATING ATPASE"/>
    <property type="match status" value="1"/>
</dbReference>
<dbReference type="PANTHER" id="PTHR10803:SF3">
    <property type="entry name" value="ATPASE GET3"/>
    <property type="match status" value="1"/>
</dbReference>
<dbReference type="Pfam" id="PF02374">
    <property type="entry name" value="ArsA_ATPase"/>
    <property type="match status" value="1"/>
</dbReference>
<dbReference type="SUPFAM" id="SSF52540">
    <property type="entry name" value="P-loop containing nucleoside triphosphate hydrolases"/>
    <property type="match status" value="1"/>
</dbReference>
<protein>
    <recommendedName>
        <fullName evidence="1">ATPase get3</fullName>
        <ecNumber evidence="1">3.6.-.-</ecNumber>
    </recommendedName>
    <alternativeName>
        <fullName evidence="1">Arsenical pump-driving ATPase</fullName>
    </alternativeName>
    <alternativeName>
        <fullName evidence="1">Arsenite-stimulated ATPase</fullName>
    </alternativeName>
    <alternativeName>
        <fullName evidence="1">Golgi to ER traffic protein 3</fullName>
    </alternativeName>
    <alternativeName>
        <fullName evidence="1">Guided entry of tail-anchored proteins 3</fullName>
    </alternativeName>
</protein>
<keyword id="KW-0067">ATP-binding</keyword>
<keyword id="KW-0963">Cytoplasm</keyword>
<keyword id="KW-0256">Endoplasmic reticulum</keyword>
<keyword id="KW-0378">Hydrolase</keyword>
<keyword id="KW-0479">Metal-binding</keyword>
<keyword id="KW-0547">Nucleotide-binding</keyword>
<keyword id="KW-1185">Reference proteome</keyword>
<keyword id="KW-0813">Transport</keyword>
<keyword id="KW-0862">Zinc</keyword>
<gene>
    <name type="primary">get3</name>
    <name type="ORF">ATEG_04670</name>
</gene>
<feature type="chain" id="PRO_0000388193" description="ATPase get3">
    <location>
        <begin position="1"/>
        <end position="340"/>
    </location>
</feature>
<feature type="active site" evidence="1">
    <location>
        <position position="63"/>
    </location>
</feature>
<feature type="binding site" evidence="1">
    <location>
        <begin position="34"/>
        <end position="41"/>
    </location>
    <ligand>
        <name>ATP</name>
        <dbReference type="ChEBI" id="CHEBI:30616"/>
    </ligand>
</feature>
<feature type="binding site" evidence="1">
    <location>
        <position position="245"/>
    </location>
    <ligand>
        <name>ATP</name>
        <dbReference type="ChEBI" id="CHEBI:30616"/>
    </ligand>
</feature>
<feature type="binding site" evidence="1">
    <location>
        <position position="272"/>
    </location>
    <ligand>
        <name>ATP</name>
        <dbReference type="ChEBI" id="CHEBI:30616"/>
    </ligand>
</feature>
<feature type="binding site" evidence="1">
    <location>
        <position position="283"/>
    </location>
    <ligand>
        <name>Zn(2+)</name>
        <dbReference type="ChEBI" id="CHEBI:29105"/>
        <note>ligand shared between dimeric partners</note>
    </ligand>
</feature>
<feature type="binding site" evidence="1">
    <location>
        <position position="286"/>
    </location>
    <ligand>
        <name>Zn(2+)</name>
        <dbReference type="ChEBI" id="CHEBI:29105"/>
        <note>ligand shared between dimeric partners</note>
    </ligand>
</feature>
<name>GET3_ASPTN</name>
<comment type="function">
    <text evidence="1">ATPase required for the post-translational delivery of tail-anchored (TA) proteins to the endoplasmic reticulum. Recognizes and selectively binds the transmembrane domain of TA proteins in the cytosol. This complex then targets to the endoplasmic reticulum by membrane-bound receptors, where the tail-anchored protein is released for insertion. This process is regulated by ATP binding and hydrolysis. ATP binding drives the homodimer towards the closed dimer state, facilitating recognition of newly synthesized TA membrane proteins. ATP hydrolysis is required for insertion. Subsequently, the homodimer reverts towards the open dimer state, lowering its affinity for the membrane-bound receptor, and returning it to the cytosol to initiate a new round of targeting.</text>
</comment>
<comment type="subunit">
    <text evidence="1">Homodimer.</text>
</comment>
<comment type="subcellular location">
    <subcellularLocation>
        <location evidence="1">Cytoplasm</location>
    </subcellularLocation>
    <subcellularLocation>
        <location evidence="1">Endoplasmic reticulum</location>
    </subcellularLocation>
</comment>
<comment type="similarity">
    <text evidence="1">Belongs to the arsA ATPase family.</text>
</comment>
<proteinExistence type="inferred from homology"/>
<reference key="1">
    <citation type="submission" date="2005-09" db="EMBL/GenBank/DDBJ databases">
        <title>Annotation of the Aspergillus terreus NIH2624 genome.</title>
        <authorList>
            <person name="Birren B.W."/>
            <person name="Lander E.S."/>
            <person name="Galagan J.E."/>
            <person name="Nusbaum C."/>
            <person name="Devon K."/>
            <person name="Henn M."/>
            <person name="Ma L.-J."/>
            <person name="Jaffe D.B."/>
            <person name="Butler J."/>
            <person name="Alvarez P."/>
            <person name="Gnerre S."/>
            <person name="Grabherr M."/>
            <person name="Kleber M."/>
            <person name="Mauceli E.W."/>
            <person name="Brockman W."/>
            <person name="Rounsley S."/>
            <person name="Young S.K."/>
            <person name="LaButti K."/>
            <person name="Pushparaj V."/>
            <person name="DeCaprio D."/>
            <person name="Crawford M."/>
            <person name="Koehrsen M."/>
            <person name="Engels R."/>
            <person name="Montgomery P."/>
            <person name="Pearson M."/>
            <person name="Howarth C."/>
            <person name="Larson L."/>
            <person name="Luoma S."/>
            <person name="White J."/>
            <person name="Alvarado L."/>
            <person name="Kodira C.D."/>
            <person name="Zeng Q."/>
            <person name="Oleary S."/>
            <person name="Yandava C."/>
            <person name="Denning D.W."/>
            <person name="Nierman W.C."/>
            <person name="Milne T."/>
            <person name="Madden K."/>
        </authorList>
    </citation>
    <scope>NUCLEOTIDE SEQUENCE [LARGE SCALE GENOMIC DNA]</scope>
    <source>
        <strain>NIH 2624 / FGSC A1156</strain>
    </source>
</reference>
<accession>Q0CNR4</accession>
<evidence type="ECO:0000255" key="1">
    <source>
        <dbReference type="HAMAP-Rule" id="MF_03112"/>
    </source>
</evidence>